<reference key="1">
    <citation type="submission" date="2004-11" db="EMBL/GenBank/DDBJ databases">
        <authorList>
            <consortium name="The German cDNA consortium"/>
        </authorList>
    </citation>
    <scope>NUCLEOTIDE SEQUENCE [LARGE SCALE MRNA]</scope>
    <source>
        <tissue>Kidney</tissue>
    </source>
</reference>
<accession>Q5R7M1</accession>
<comment type="function">
    <text evidence="2">Lectin that binds beta-galactoside and a wide array of complex carbohydrates. Plays a role in regulating apoptosis, cell proliferation and cell differentiation. Inhibits CD45 protein phosphatase activity and therefore the dephosphorylation of Lyn kinase. Strong inducer of T-cell apoptosis.</text>
</comment>
<comment type="subunit">
    <text evidence="2">Homodimer. Binds LGALS3BP. Interacts with CD2, CD3, CD4, CD6, CD7, CD43, ALCAM and CD45. Interacts with laminin (via poly-N-acetyllactosamine). Interacts with SUSD2.</text>
</comment>
<comment type="subcellular location">
    <subcellularLocation>
        <location evidence="2">Secreted</location>
        <location evidence="2">Extracellular space</location>
        <location evidence="2">Extracellular matrix</location>
    </subcellularLocation>
</comment>
<organism>
    <name type="scientific">Pongo abelii</name>
    <name type="common">Sumatran orangutan</name>
    <name type="synonym">Pongo pygmaeus abelii</name>
    <dbReference type="NCBI Taxonomy" id="9601"/>
    <lineage>
        <taxon>Eukaryota</taxon>
        <taxon>Metazoa</taxon>
        <taxon>Chordata</taxon>
        <taxon>Craniata</taxon>
        <taxon>Vertebrata</taxon>
        <taxon>Euteleostomi</taxon>
        <taxon>Mammalia</taxon>
        <taxon>Eutheria</taxon>
        <taxon>Euarchontoglires</taxon>
        <taxon>Primates</taxon>
        <taxon>Haplorrhini</taxon>
        <taxon>Catarrhini</taxon>
        <taxon>Hominidae</taxon>
        <taxon>Pongo</taxon>
    </lineage>
</organism>
<evidence type="ECO:0000250" key="1"/>
<evidence type="ECO:0000250" key="2">
    <source>
        <dbReference type="UniProtKB" id="P09382"/>
    </source>
</evidence>
<evidence type="ECO:0000250" key="3">
    <source>
        <dbReference type="UniProtKB" id="P16045"/>
    </source>
</evidence>
<evidence type="ECO:0000255" key="4">
    <source>
        <dbReference type="PROSITE-ProRule" id="PRU00639"/>
    </source>
</evidence>
<proteinExistence type="evidence at transcript level"/>
<keyword id="KW-0007">Acetylation</keyword>
<keyword id="KW-0053">Apoptosis</keyword>
<keyword id="KW-0272">Extracellular matrix</keyword>
<keyword id="KW-0430">Lectin</keyword>
<keyword id="KW-0597">Phosphoprotein</keyword>
<keyword id="KW-1185">Reference proteome</keyword>
<keyword id="KW-0964">Secreted</keyword>
<protein>
    <recommendedName>
        <fullName>Galectin-1</fullName>
        <shortName>Gal-1</shortName>
    </recommendedName>
    <alternativeName>
        <fullName>14 kDa lectin</fullName>
    </alternativeName>
    <alternativeName>
        <fullName>Beta-galactoside-binding lectin L-14-I</fullName>
    </alternativeName>
    <alternativeName>
        <fullName>Galaptin</fullName>
    </alternativeName>
    <alternativeName>
        <fullName>Lactose-binding lectin 1</fullName>
    </alternativeName>
    <alternativeName>
        <fullName>Lectin galactoside-binding soluble 1</fullName>
    </alternativeName>
    <alternativeName>
        <fullName>S-Lac lectin 1</fullName>
    </alternativeName>
</protein>
<sequence length="135" mass="14746">MACGLVASNLNLKPGECLRVRGEVTPDAKSFVLNLGKASNNLCLHFNPRFNAHGDANTIVCNSKDGGAWGTEQREAVFPFQPGSVAEVCITFDQTNLTIKLPDGYEFKFPNRLNLEAINYMAADGDFKIKCVAFD</sequence>
<feature type="initiator methionine" description="Removed" evidence="2">
    <location>
        <position position="1"/>
    </location>
</feature>
<feature type="chain" id="PRO_0000076919" description="Galectin-1">
    <location>
        <begin position="2"/>
        <end position="135"/>
    </location>
</feature>
<feature type="domain" description="Galectin" evidence="4">
    <location>
        <begin position="4"/>
        <end position="135"/>
    </location>
</feature>
<feature type="binding site" evidence="1">
    <location>
        <begin position="45"/>
        <end position="49"/>
    </location>
    <ligand>
        <name>a beta-D-galactoside</name>
        <dbReference type="ChEBI" id="CHEBI:28034"/>
    </ligand>
</feature>
<feature type="binding site" evidence="1">
    <location>
        <position position="53"/>
    </location>
    <ligand>
        <name>a beta-D-galactoside</name>
        <dbReference type="ChEBI" id="CHEBI:28034"/>
    </ligand>
</feature>
<feature type="binding site" evidence="1">
    <location>
        <position position="62"/>
    </location>
    <ligand>
        <name>a beta-D-galactoside</name>
        <dbReference type="ChEBI" id="CHEBI:28034"/>
    </ligand>
</feature>
<feature type="binding site" evidence="1">
    <location>
        <begin position="69"/>
        <end position="72"/>
    </location>
    <ligand>
        <name>a beta-D-galactoside</name>
        <dbReference type="ChEBI" id="CHEBI:28034"/>
    </ligand>
</feature>
<feature type="modified residue" description="N-acetylalanine" evidence="2">
    <location>
        <position position="2"/>
    </location>
</feature>
<feature type="modified residue" description="N6-acetyllysine" evidence="3">
    <location>
        <position position="13"/>
    </location>
</feature>
<feature type="modified residue" description="N6-acetyllysine" evidence="2">
    <location>
        <position position="29"/>
    </location>
</feature>
<feature type="modified residue" description="Phosphoserine" evidence="2">
    <location>
        <position position="30"/>
    </location>
</feature>
<feature type="modified residue" description="N6-acetyllysine; alternate" evidence="3">
    <location>
        <position position="108"/>
    </location>
</feature>
<feature type="modified residue" description="N6-succinyllysine; alternate" evidence="3">
    <location>
        <position position="108"/>
    </location>
</feature>
<feature type="modified residue" description="N6-acetyllysine" evidence="3">
    <location>
        <position position="128"/>
    </location>
</feature>
<dbReference type="EMBL" id="CR860093">
    <property type="protein sequence ID" value="CAH92239.1"/>
    <property type="molecule type" value="mRNA"/>
</dbReference>
<dbReference type="RefSeq" id="NP_001126310.1">
    <property type="nucleotide sequence ID" value="NM_001132838.1"/>
</dbReference>
<dbReference type="RefSeq" id="XP_009232614.1">
    <property type="nucleotide sequence ID" value="XM_009234339.1"/>
</dbReference>
<dbReference type="BMRB" id="Q5R7M1"/>
<dbReference type="SMR" id="Q5R7M1"/>
<dbReference type="FunCoup" id="Q5R7M1">
    <property type="interactions" value="154"/>
</dbReference>
<dbReference type="GeneID" id="100173289"/>
<dbReference type="KEGG" id="pon:100173289"/>
<dbReference type="CTD" id="3956"/>
<dbReference type="InParanoid" id="Q5R7M1"/>
<dbReference type="OrthoDB" id="8443340at2759"/>
<dbReference type="Proteomes" id="UP000001595">
    <property type="component" value="Unplaced"/>
</dbReference>
<dbReference type="GO" id="GO:0005615">
    <property type="term" value="C:extracellular space"/>
    <property type="evidence" value="ECO:0007669"/>
    <property type="project" value="TreeGrafter"/>
</dbReference>
<dbReference type="GO" id="GO:0030395">
    <property type="term" value="F:lactose binding"/>
    <property type="evidence" value="ECO:0007669"/>
    <property type="project" value="TreeGrafter"/>
</dbReference>
<dbReference type="GO" id="GO:0043236">
    <property type="term" value="F:laminin binding"/>
    <property type="evidence" value="ECO:0007669"/>
    <property type="project" value="TreeGrafter"/>
</dbReference>
<dbReference type="GO" id="GO:0006915">
    <property type="term" value="P:apoptotic process"/>
    <property type="evidence" value="ECO:0007669"/>
    <property type="project" value="UniProtKB-KW"/>
</dbReference>
<dbReference type="CDD" id="cd00070">
    <property type="entry name" value="GLECT"/>
    <property type="match status" value="1"/>
</dbReference>
<dbReference type="FunFam" id="2.60.120.200:FF:000021">
    <property type="entry name" value="Galectin"/>
    <property type="match status" value="1"/>
</dbReference>
<dbReference type="Gene3D" id="2.60.120.200">
    <property type="match status" value="1"/>
</dbReference>
<dbReference type="InterPro" id="IPR013320">
    <property type="entry name" value="ConA-like_dom_sf"/>
</dbReference>
<dbReference type="InterPro" id="IPR044156">
    <property type="entry name" value="Galectin-like"/>
</dbReference>
<dbReference type="InterPro" id="IPR001079">
    <property type="entry name" value="Galectin_CRD"/>
</dbReference>
<dbReference type="PANTHER" id="PTHR11346">
    <property type="entry name" value="GALECTIN"/>
    <property type="match status" value="1"/>
</dbReference>
<dbReference type="PANTHER" id="PTHR11346:SF97">
    <property type="entry name" value="GALECTIN-1"/>
    <property type="match status" value="1"/>
</dbReference>
<dbReference type="Pfam" id="PF00337">
    <property type="entry name" value="Gal-bind_lectin"/>
    <property type="match status" value="1"/>
</dbReference>
<dbReference type="SMART" id="SM00908">
    <property type="entry name" value="Gal-bind_lectin"/>
    <property type="match status" value="1"/>
</dbReference>
<dbReference type="SMART" id="SM00276">
    <property type="entry name" value="GLECT"/>
    <property type="match status" value="1"/>
</dbReference>
<dbReference type="SUPFAM" id="SSF49899">
    <property type="entry name" value="Concanavalin A-like lectins/glucanases"/>
    <property type="match status" value="1"/>
</dbReference>
<dbReference type="PROSITE" id="PS51304">
    <property type="entry name" value="GALECTIN"/>
    <property type="match status" value="1"/>
</dbReference>
<gene>
    <name type="primary">LGALS1</name>
</gene>
<name>LEG1_PONAB</name>